<keyword id="KW-0067">ATP-binding</keyword>
<keyword id="KW-0173">Coenzyme A biosynthesis</keyword>
<keyword id="KW-0963">Cytoplasm</keyword>
<keyword id="KW-0418">Kinase</keyword>
<keyword id="KW-0547">Nucleotide-binding</keyword>
<keyword id="KW-0808">Transferase</keyword>
<sequence length="331" mass="37815">MSIATEIIGVPETLDHFQSESFSPYHFFSSEQWAKFRADTPLTLTSDEVKRLRSMGDPIDLDEVRRIYLSLSRLLSAHVESSQLLFEQRNRFLSLSDVTKTPFVIGIAGSVAVGKSTTARILKELLGRWPSSPKVDLITTDGFLHPNAVLQREKLMQRKGFPESYDTAAILRFLSAIKAGRPDVQAPCYSHLVYDVLPDEYKIVDRPDILIFEGINVLQSRDLPADGKIVPMVSDFFDFSIYIDAAEDQIHNWYVTRFMRLRETAFRDPNSYFHRYASISDAEALEIAADLWTNINLKNLRQNILPTRPRADLILKKGKDHLIEQVALRKL</sequence>
<accession>B3PWH7</accession>
<proteinExistence type="inferred from homology"/>
<feature type="chain" id="PRO_1000099940" description="Pantothenate kinase">
    <location>
        <begin position="1"/>
        <end position="331"/>
    </location>
</feature>
<feature type="binding site" evidence="1">
    <location>
        <begin position="109"/>
        <end position="116"/>
    </location>
    <ligand>
        <name>ATP</name>
        <dbReference type="ChEBI" id="CHEBI:30616"/>
    </ligand>
</feature>
<name>COAA_RHIE6</name>
<dbReference type="EC" id="2.7.1.33" evidence="1"/>
<dbReference type="EMBL" id="CP001074">
    <property type="protein sequence ID" value="ACE89045.1"/>
    <property type="molecule type" value="Genomic_DNA"/>
</dbReference>
<dbReference type="SMR" id="B3PWH7"/>
<dbReference type="KEGG" id="rec:RHECIAT_CH0000042"/>
<dbReference type="eggNOG" id="COG1072">
    <property type="taxonomic scope" value="Bacteria"/>
</dbReference>
<dbReference type="HOGENOM" id="CLU_053818_1_1_5"/>
<dbReference type="UniPathway" id="UPA00241">
    <property type="reaction ID" value="UER00352"/>
</dbReference>
<dbReference type="Proteomes" id="UP000008817">
    <property type="component" value="Chromosome"/>
</dbReference>
<dbReference type="GO" id="GO:0005737">
    <property type="term" value="C:cytoplasm"/>
    <property type="evidence" value="ECO:0007669"/>
    <property type="project" value="UniProtKB-SubCell"/>
</dbReference>
<dbReference type="GO" id="GO:0005524">
    <property type="term" value="F:ATP binding"/>
    <property type="evidence" value="ECO:0007669"/>
    <property type="project" value="UniProtKB-UniRule"/>
</dbReference>
<dbReference type="GO" id="GO:0004594">
    <property type="term" value="F:pantothenate kinase activity"/>
    <property type="evidence" value="ECO:0007669"/>
    <property type="project" value="UniProtKB-UniRule"/>
</dbReference>
<dbReference type="GO" id="GO:0015937">
    <property type="term" value="P:coenzyme A biosynthetic process"/>
    <property type="evidence" value="ECO:0007669"/>
    <property type="project" value="UniProtKB-UniRule"/>
</dbReference>
<dbReference type="CDD" id="cd02025">
    <property type="entry name" value="PanK"/>
    <property type="match status" value="1"/>
</dbReference>
<dbReference type="Gene3D" id="3.40.50.300">
    <property type="entry name" value="P-loop containing nucleotide triphosphate hydrolases"/>
    <property type="match status" value="1"/>
</dbReference>
<dbReference type="HAMAP" id="MF_00215">
    <property type="entry name" value="Pantothen_kinase_1"/>
    <property type="match status" value="1"/>
</dbReference>
<dbReference type="InterPro" id="IPR027417">
    <property type="entry name" value="P-loop_NTPase"/>
</dbReference>
<dbReference type="InterPro" id="IPR004566">
    <property type="entry name" value="PanK"/>
</dbReference>
<dbReference type="InterPro" id="IPR006083">
    <property type="entry name" value="PRK/URK"/>
</dbReference>
<dbReference type="NCBIfam" id="TIGR00554">
    <property type="entry name" value="panK_bact"/>
    <property type="match status" value="1"/>
</dbReference>
<dbReference type="PANTHER" id="PTHR10285">
    <property type="entry name" value="URIDINE KINASE"/>
    <property type="match status" value="1"/>
</dbReference>
<dbReference type="Pfam" id="PF00485">
    <property type="entry name" value="PRK"/>
    <property type="match status" value="1"/>
</dbReference>
<dbReference type="PIRSF" id="PIRSF000545">
    <property type="entry name" value="Pantothenate_kin"/>
    <property type="match status" value="1"/>
</dbReference>
<dbReference type="SUPFAM" id="SSF52540">
    <property type="entry name" value="P-loop containing nucleoside triphosphate hydrolases"/>
    <property type="match status" value="1"/>
</dbReference>
<evidence type="ECO:0000255" key="1">
    <source>
        <dbReference type="HAMAP-Rule" id="MF_00215"/>
    </source>
</evidence>
<protein>
    <recommendedName>
        <fullName evidence="1">Pantothenate kinase</fullName>
        <ecNumber evidence="1">2.7.1.33</ecNumber>
    </recommendedName>
    <alternativeName>
        <fullName evidence="1">Pantothenic acid kinase</fullName>
    </alternativeName>
</protein>
<gene>
    <name evidence="1" type="primary">coaA</name>
    <name type="ordered locus">RHECIAT_CH0000042</name>
</gene>
<reference key="1">
    <citation type="journal article" date="2010" name="Appl. Environ. Microbiol.">
        <title>Conserved symbiotic plasmid DNA sequences in the multireplicon pangenomic structure of Rhizobium etli.</title>
        <authorList>
            <person name="Gonzalez V."/>
            <person name="Acosta J.L."/>
            <person name="Santamaria R.I."/>
            <person name="Bustos P."/>
            <person name="Fernandez J.L."/>
            <person name="Hernandez Gonzalez I.L."/>
            <person name="Diaz R."/>
            <person name="Flores M."/>
            <person name="Palacios R."/>
            <person name="Mora J."/>
            <person name="Davila G."/>
        </authorList>
    </citation>
    <scope>NUCLEOTIDE SEQUENCE [LARGE SCALE GENOMIC DNA]</scope>
    <source>
        <strain>CIAT 652</strain>
    </source>
</reference>
<organism>
    <name type="scientific">Rhizobium etli (strain CIAT 652)</name>
    <dbReference type="NCBI Taxonomy" id="491916"/>
    <lineage>
        <taxon>Bacteria</taxon>
        <taxon>Pseudomonadati</taxon>
        <taxon>Pseudomonadota</taxon>
        <taxon>Alphaproteobacteria</taxon>
        <taxon>Hyphomicrobiales</taxon>
        <taxon>Rhizobiaceae</taxon>
        <taxon>Rhizobium/Agrobacterium group</taxon>
        <taxon>Rhizobium</taxon>
    </lineage>
</organism>
<comment type="catalytic activity">
    <reaction evidence="1">
        <text>(R)-pantothenate + ATP = (R)-4'-phosphopantothenate + ADP + H(+)</text>
        <dbReference type="Rhea" id="RHEA:16373"/>
        <dbReference type="ChEBI" id="CHEBI:10986"/>
        <dbReference type="ChEBI" id="CHEBI:15378"/>
        <dbReference type="ChEBI" id="CHEBI:29032"/>
        <dbReference type="ChEBI" id="CHEBI:30616"/>
        <dbReference type="ChEBI" id="CHEBI:456216"/>
        <dbReference type="EC" id="2.7.1.33"/>
    </reaction>
</comment>
<comment type="pathway">
    <text evidence="1">Cofactor biosynthesis; coenzyme A biosynthesis; CoA from (R)-pantothenate: step 1/5.</text>
</comment>
<comment type="subcellular location">
    <subcellularLocation>
        <location evidence="1">Cytoplasm</location>
    </subcellularLocation>
</comment>
<comment type="similarity">
    <text evidence="1">Belongs to the prokaryotic pantothenate kinase family.</text>
</comment>